<evidence type="ECO:0000255" key="1">
    <source>
        <dbReference type="HAMAP-Rule" id="MF_00195"/>
    </source>
</evidence>
<organism>
    <name type="scientific">Thermosipho africanus (strain TCF52B)</name>
    <dbReference type="NCBI Taxonomy" id="484019"/>
    <lineage>
        <taxon>Bacteria</taxon>
        <taxon>Thermotogati</taxon>
        <taxon>Thermotogota</taxon>
        <taxon>Thermotogae</taxon>
        <taxon>Thermotogales</taxon>
        <taxon>Fervidobacteriaceae</taxon>
        <taxon>Thermosipho</taxon>
    </lineage>
</organism>
<protein>
    <recommendedName>
        <fullName evidence="1">GTPase Der</fullName>
    </recommendedName>
    <alternativeName>
        <fullName evidence="1">GTP-binding protein EngA</fullName>
    </alternativeName>
</protein>
<proteinExistence type="inferred from homology"/>
<reference key="1">
    <citation type="journal article" date="2009" name="J. Bacteriol.">
        <title>The genome of Thermosipho africanus TCF52B: lateral genetic connections to the Firmicutes and Archaea.</title>
        <authorList>
            <person name="Nesboe C.L."/>
            <person name="Bapteste E."/>
            <person name="Curtis B."/>
            <person name="Dahle H."/>
            <person name="Lopez P."/>
            <person name="Macleod D."/>
            <person name="Dlutek M."/>
            <person name="Bowman S."/>
            <person name="Zhaxybayeva O."/>
            <person name="Birkeland N.-K."/>
            <person name="Doolittle W.F."/>
        </authorList>
    </citation>
    <scope>NUCLEOTIDE SEQUENCE [LARGE SCALE GENOMIC DNA]</scope>
    <source>
        <strain>TCF52B</strain>
    </source>
</reference>
<comment type="function">
    <text evidence="1">GTPase that plays an essential role in the late steps of ribosome biogenesis.</text>
</comment>
<comment type="subunit">
    <text evidence="1">Associates with the 50S ribosomal subunit.</text>
</comment>
<comment type="similarity">
    <text evidence="1">Belongs to the TRAFAC class TrmE-Era-EngA-EngB-Septin-like GTPase superfamily. EngA (Der) GTPase family.</text>
</comment>
<accession>B7IE34</accession>
<keyword id="KW-0342">GTP-binding</keyword>
<keyword id="KW-0547">Nucleotide-binding</keyword>
<keyword id="KW-1185">Reference proteome</keyword>
<keyword id="KW-0677">Repeat</keyword>
<keyword id="KW-0690">Ribosome biogenesis</keyword>
<name>DER_THEAB</name>
<sequence>MPTVLIVGKSNVGKSTLFNKLIGYKKSIVDDKEGVTRDAVSGRVSYYSKTFNIVDTGGIFENPEDDIINKSKDLTLKMLNEADLILFVIDAKNGITSEDYYLADIIRKSNNDVILVSNKSESERRVQNNLPDIYKLGFGDPIFVSAEQGKNIDTLIERIVNVLESKGLSLEENLKEESQSIIRVSFIGRPNAGKSTLFNSILNKERVLVTPIPGTTRDSVDELVTINGRKYLFVDTAGLRRKSKVDYKSLDMYSNVRSIKSIENSDVVVILIDAIEGITHQDQRIAGIAENRGKATIVAFNKIDLIKNFKYKKEEFIDQFNEKLYFINYSPLIFLSAINKKGIDNLINAIDEAYKSLHYRVQTSAVNSAIQRMMAFTPPPKGLKILYGTQVDIRPPTFLFFTNGKKVPEFYQNHIRKTIRENIYPFVGAPIFLKFKSRH</sequence>
<feature type="chain" id="PRO_1000118652" description="GTPase Der">
    <location>
        <begin position="1"/>
        <end position="439"/>
    </location>
</feature>
<feature type="domain" description="EngA-type G 1">
    <location>
        <begin position="2"/>
        <end position="167"/>
    </location>
</feature>
<feature type="domain" description="EngA-type G 2">
    <location>
        <begin position="182"/>
        <end position="358"/>
    </location>
</feature>
<feature type="domain" description="KH-like" evidence="1">
    <location>
        <begin position="359"/>
        <end position="439"/>
    </location>
</feature>
<feature type="binding site" evidence="1">
    <location>
        <begin position="8"/>
        <end position="15"/>
    </location>
    <ligand>
        <name>GTP</name>
        <dbReference type="ChEBI" id="CHEBI:37565"/>
        <label>1</label>
    </ligand>
</feature>
<feature type="binding site" evidence="1">
    <location>
        <begin position="55"/>
        <end position="59"/>
    </location>
    <ligand>
        <name>GTP</name>
        <dbReference type="ChEBI" id="CHEBI:37565"/>
        <label>1</label>
    </ligand>
</feature>
<feature type="binding site" evidence="1">
    <location>
        <begin position="118"/>
        <end position="121"/>
    </location>
    <ligand>
        <name>GTP</name>
        <dbReference type="ChEBI" id="CHEBI:37565"/>
        <label>1</label>
    </ligand>
</feature>
<feature type="binding site" evidence="1">
    <location>
        <begin position="188"/>
        <end position="195"/>
    </location>
    <ligand>
        <name>GTP</name>
        <dbReference type="ChEBI" id="CHEBI:37565"/>
        <label>2</label>
    </ligand>
</feature>
<feature type="binding site" evidence="1">
    <location>
        <begin position="235"/>
        <end position="239"/>
    </location>
    <ligand>
        <name>GTP</name>
        <dbReference type="ChEBI" id="CHEBI:37565"/>
        <label>2</label>
    </ligand>
</feature>
<feature type="binding site" evidence="1">
    <location>
        <begin position="301"/>
        <end position="304"/>
    </location>
    <ligand>
        <name>GTP</name>
        <dbReference type="ChEBI" id="CHEBI:37565"/>
        <label>2</label>
    </ligand>
</feature>
<dbReference type="EMBL" id="CP001185">
    <property type="protein sequence ID" value="ACJ76261.1"/>
    <property type="molecule type" value="Genomic_DNA"/>
</dbReference>
<dbReference type="RefSeq" id="WP_012580451.1">
    <property type="nucleotide sequence ID" value="NC_011653.1"/>
</dbReference>
<dbReference type="SMR" id="B7IE34"/>
<dbReference type="STRING" id="484019.THA_1830"/>
<dbReference type="KEGG" id="taf:THA_1830"/>
<dbReference type="eggNOG" id="COG1160">
    <property type="taxonomic scope" value="Bacteria"/>
</dbReference>
<dbReference type="HOGENOM" id="CLU_016077_6_2_0"/>
<dbReference type="OrthoDB" id="9805918at2"/>
<dbReference type="Proteomes" id="UP000002453">
    <property type="component" value="Chromosome"/>
</dbReference>
<dbReference type="GO" id="GO:0005525">
    <property type="term" value="F:GTP binding"/>
    <property type="evidence" value="ECO:0007669"/>
    <property type="project" value="UniProtKB-UniRule"/>
</dbReference>
<dbReference type="GO" id="GO:0043022">
    <property type="term" value="F:ribosome binding"/>
    <property type="evidence" value="ECO:0007669"/>
    <property type="project" value="TreeGrafter"/>
</dbReference>
<dbReference type="GO" id="GO:0042254">
    <property type="term" value="P:ribosome biogenesis"/>
    <property type="evidence" value="ECO:0007669"/>
    <property type="project" value="UniProtKB-KW"/>
</dbReference>
<dbReference type="CDD" id="cd01894">
    <property type="entry name" value="EngA1"/>
    <property type="match status" value="1"/>
</dbReference>
<dbReference type="CDD" id="cd01895">
    <property type="entry name" value="EngA2"/>
    <property type="match status" value="1"/>
</dbReference>
<dbReference type="FunFam" id="3.40.50.300:FF:000040">
    <property type="entry name" value="GTPase Der"/>
    <property type="match status" value="1"/>
</dbReference>
<dbReference type="Gene3D" id="3.30.300.20">
    <property type="match status" value="1"/>
</dbReference>
<dbReference type="Gene3D" id="3.40.50.300">
    <property type="entry name" value="P-loop containing nucleotide triphosphate hydrolases"/>
    <property type="match status" value="2"/>
</dbReference>
<dbReference type="HAMAP" id="MF_00195">
    <property type="entry name" value="GTPase_Der"/>
    <property type="match status" value="1"/>
</dbReference>
<dbReference type="InterPro" id="IPR031166">
    <property type="entry name" value="G_ENGA"/>
</dbReference>
<dbReference type="InterPro" id="IPR006073">
    <property type="entry name" value="GTP-bd"/>
</dbReference>
<dbReference type="InterPro" id="IPR016484">
    <property type="entry name" value="GTPase_Der"/>
</dbReference>
<dbReference type="InterPro" id="IPR032859">
    <property type="entry name" value="KH_dom-like"/>
</dbReference>
<dbReference type="InterPro" id="IPR015946">
    <property type="entry name" value="KH_dom-like_a/b"/>
</dbReference>
<dbReference type="InterPro" id="IPR027417">
    <property type="entry name" value="P-loop_NTPase"/>
</dbReference>
<dbReference type="InterPro" id="IPR005225">
    <property type="entry name" value="Small_GTP-bd"/>
</dbReference>
<dbReference type="NCBIfam" id="TIGR03594">
    <property type="entry name" value="GTPase_EngA"/>
    <property type="match status" value="1"/>
</dbReference>
<dbReference type="NCBIfam" id="TIGR00231">
    <property type="entry name" value="small_GTP"/>
    <property type="match status" value="2"/>
</dbReference>
<dbReference type="PANTHER" id="PTHR43834">
    <property type="entry name" value="GTPASE DER"/>
    <property type="match status" value="1"/>
</dbReference>
<dbReference type="PANTHER" id="PTHR43834:SF6">
    <property type="entry name" value="GTPASE DER"/>
    <property type="match status" value="1"/>
</dbReference>
<dbReference type="Pfam" id="PF14714">
    <property type="entry name" value="KH_dom-like"/>
    <property type="match status" value="1"/>
</dbReference>
<dbReference type="Pfam" id="PF01926">
    <property type="entry name" value="MMR_HSR1"/>
    <property type="match status" value="2"/>
</dbReference>
<dbReference type="PIRSF" id="PIRSF006485">
    <property type="entry name" value="GTP-binding_EngA"/>
    <property type="match status" value="1"/>
</dbReference>
<dbReference type="PRINTS" id="PR00326">
    <property type="entry name" value="GTP1OBG"/>
</dbReference>
<dbReference type="SUPFAM" id="SSF52540">
    <property type="entry name" value="P-loop containing nucleoside triphosphate hydrolases"/>
    <property type="match status" value="2"/>
</dbReference>
<dbReference type="PROSITE" id="PS51712">
    <property type="entry name" value="G_ENGA"/>
    <property type="match status" value="2"/>
</dbReference>
<gene>
    <name evidence="1" type="primary">der</name>
    <name type="synonym">engA</name>
    <name type="ordered locus">THA_1830</name>
</gene>